<gene>
    <name type="ordered locus">AF_0149</name>
</gene>
<protein>
    <recommendedName>
        <fullName>Uncharacterized protein AF_0149</fullName>
    </recommendedName>
</protein>
<proteinExistence type="predicted"/>
<comment type="subcellular location">
    <subcellularLocation>
        <location evidence="2">Cell membrane</location>
        <topology evidence="2">Multi-pass membrane protein</topology>
    </subcellularLocation>
</comment>
<dbReference type="EMBL" id="AE000782">
    <property type="protein sequence ID" value="AAB91088.1"/>
    <property type="molecule type" value="Genomic_DNA"/>
</dbReference>
<dbReference type="PIR" id="E69268">
    <property type="entry name" value="E69268"/>
</dbReference>
<dbReference type="SMR" id="O30088"/>
<dbReference type="PaxDb" id="224325-AF_0149"/>
<dbReference type="EnsemblBacteria" id="AAB91088">
    <property type="protein sequence ID" value="AAB91088"/>
    <property type="gene ID" value="AF_0149"/>
</dbReference>
<dbReference type="KEGG" id="afu:AF_0149"/>
<dbReference type="HOGENOM" id="CLU_2519563_0_0_2"/>
<dbReference type="Proteomes" id="UP000002199">
    <property type="component" value="Chromosome"/>
</dbReference>
<dbReference type="GO" id="GO:0005886">
    <property type="term" value="C:plasma membrane"/>
    <property type="evidence" value="ECO:0007669"/>
    <property type="project" value="UniProtKB-SubCell"/>
</dbReference>
<reference key="1">
    <citation type="journal article" date="1997" name="Nature">
        <title>The complete genome sequence of the hyperthermophilic, sulphate-reducing archaeon Archaeoglobus fulgidus.</title>
        <authorList>
            <person name="Klenk H.-P."/>
            <person name="Clayton R.A."/>
            <person name="Tomb J.-F."/>
            <person name="White O."/>
            <person name="Nelson K.E."/>
            <person name="Ketchum K.A."/>
            <person name="Dodson R.J."/>
            <person name="Gwinn M.L."/>
            <person name="Hickey E.K."/>
            <person name="Peterson J.D."/>
            <person name="Richardson D.L."/>
            <person name="Kerlavage A.R."/>
            <person name="Graham D.E."/>
            <person name="Kyrpides N.C."/>
            <person name="Fleischmann R.D."/>
            <person name="Quackenbush J."/>
            <person name="Lee N.H."/>
            <person name="Sutton G.G."/>
            <person name="Gill S.R."/>
            <person name="Kirkness E.F."/>
            <person name="Dougherty B.A."/>
            <person name="McKenney K."/>
            <person name="Adams M.D."/>
            <person name="Loftus B.J."/>
            <person name="Peterson S.N."/>
            <person name="Reich C.I."/>
            <person name="McNeil L.K."/>
            <person name="Badger J.H."/>
            <person name="Glodek A."/>
            <person name="Zhou L."/>
            <person name="Overbeek R."/>
            <person name="Gocayne J.D."/>
            <person name="Weidman J.F."/>
            <person name="McDonald L.A."/>
            <person name="Utterback T.R."/>
            <person name="Cotton M.D."/>
            <person name="Spriggs T."/>
            <person name="Artiach P."/>
            <person name="Kaine B.P."/>
            <person name="Sykes S.M."/>
            <person name="Sadow P.W."/>
            <person name="D'Andrea K.P."/>
            <person name="Bowman C."/>
            <person name="Fujii C."/>
            <person name="Garland S.A."/>
            <person name="Mason T.M."/>
            <person name="Olsen G.J."/>
            <person name="Fraser C.M."/>
            <person name="Smith H.O."/>
            <person name="Woese C.R."/>
            <person name="Venter J.C."/>
        </authorList>
    </citation>
    <scope>NUCLEOTIDE SEQUENCE [LARGE SCALE GENOMIC DNA]</scope>
    <source>
        <strain>ATCC 49558 / DSM 4304 / JCM 9628 / NBRC 100126 / VC-16</strain>
    </source>
</reference>
<accession>O30088</accession>
<evidence type="ECO:0000255" key="1"/>
<evidence type="ECO:0000305" key="2"/>
<sequence length="84" mass="8893">MVFAYVLVSGFMLVLGIKYGRTKIYSVWKAGLIILAGFAVIFAAAWIAFTGTSASQERIGLAKSLSVVMGLIAGVLSVYVLSKS</sequence>
<keyword id="KW-1003">Cell membrane</keyword>
<keyword id="KW-0472">Membrane</keyword>
<keyword id="KW-1185">Reference proteome</keyword>
<keyword id="KW-0812">Transmembrane</keyword>
<keyword id="KW-1133">Transmembrane helix</keyword>
<organism>
    <name type="scientific">Archaeoglobus fulgidus (strain ATCC 49558 / DSM 4304 / JCM 9628 / NBRC 100126 / VC-16)</name>
    <dbReference type="NCBI Taxonomy" id="224325"/>
    <lineage>
        <taxon>Archaea</taxon>
        <taxon>Methanobacteriati</taxon>
        <taxon>Methanobacteriota</taxon>
        <taxon>Archaeoglobi</taxon>
        <taxon>Archaeoglobales</taxon>
        <taxon>Archaeoglobaceae</taxon>
        <taxon>Archaeoglobus</taxon>
    </lineage>
</organism>
<feature type="chain" id="PRO_0000127839" description="Uncharacterized protein AF_0149">
    <location>
        <begin position="1"/>
        <end position="84"/>
    </location>
</feature>
<feature type="transmembrane region" description="Helical" evidence="1">
    <location>
        <begin position="4"/>
        <end position="20"/>
    </location>
</feature>
<feature type="transmembrane region" description="Helical" evidence="1">
    <location>
        <begin position="27"/>
        <end position="49"/>
    </location>
</feature>
<feature type="transmembrane region" description="Helical" evidence="1">
    <location>
        <begin position="59"/>
        <end position="81"/>
    </location>
</feature>
<name>Y149_ARCFU</name>